<reference key="1">
    <citation type="journal article" date="2002" name="Nature">
        <title>The genome sequence of Schizosaccharomyces pombe.</title>
        <authorList>
            <person name="Wood V."/>
            <person name="Gwilliam R."/>
            <person name="Rajandream M.A."/>
            <person name="Lyne M.H."/>
            <person name="Lyne R."/>
            <person name="Stewart A."/>
            <person name="Sgouros J.G."/>
            <person name="Peat N."/>
            <person name="Hayles J."/>
            <person name="Baker S.G."/>
            <person name="Basham D."/>
            <person name="Bowman S."/>
            <person name="Brooks K."/>
            <person name="Brown D."/>
            <person name="Brown S."/>
            <person name="Chillingworth T."/>
            <person name="Churcher C.M."/>
            <person name="Collins M."/>
            <person name="Connor R."/>
            <person name="Cronin A."/>
            <person name="Davis P."/>
            <person name="Feltwell T."/>
            <person name="Fraser A."/>
            <person name="Gentles S."/>
            <person name="Goble A."/>
            <person name="Hamlin N."/>
            <person name="Harris D.E."/>
            <person name="Hidalgo J."/>
            <person name="Hodgson G."/>
            <person name="Holroyd S."/>
            <person name="Hornsby T."/>
            <person name="Howarth S."/>
            <person name="Huckle E.J."/>
            <person name="Hunt S."/>
            <person name="Jagels K."/>
            <person name="James K.D."/>
            <person name="Jones L."/>
            <person name="Jones M."/>
            <person name="Leather S."/>
            <person name="McDonald S."/>
            <person name="McLean J."/>
            <person name="Mooney P."/>
            <person name="Moule S."/>
            <person name="Mungall K.L."/>
            <person name="Murphy L.D."/>
            <person name="Niblett D."/>
            <person name="Odell C."/>
            <person name="Oliver K."/>
            <person name="O'Neil S."/>
            <person name="Pearson D."/>
            <person name="Quail M.A."/>
            <person name="Rabbinowitsch E."/>
            <person name="Rutherford K.M."/>
            <person name="Rutter S."/>
            <person name="Saunders D."/>
            <person name="Seeger K."/>
            <person name="Sharp S."/>
            <person name="Skelton J."/>
            <person name="Simmonds M.N."/>
            <person name="Squares R."/>
            <person name="Squares S."/>
            <person name="Stevens K."/>
            <person name="Taylor K."/>
            <person name="Taylor R.G."/>
            <person name="Tivey A."/>
            <person name="Walsh S.V."/>
            <person name="Warren T."/>
            <person name="Whitehead S."/>
            <person name="Woodward J.R."/>
            <person name="Volckaert G."/>
            <person name="Aert R."/>
            <person name="Robben J."/>
            <person name="Grymonprez B."/>
            <person name="Weltjens I."/>
            <person name="Vanstreels E."/>
            <person name="Rieger M."/>
            <person name="Schaefer M."/>
            <person name="Mueller-Auer S."/>
            <person name="Gabel C."/>
            <person name="Fuchs M."/>
            <person name="Duesterhoeft A."/>
            <person name="Fritzc C."/>
            <person name="Holzer E."/>
            <person name="Moestl D."/>
            <person name="Hilbert H."/>
            <person name="Borzym K."/>
            <person name="Langer I."/>
            <person name="Beck A."/>
            <person name="Lehrach H."/>
            <person name="Reinhardt R."/>
            <person name="Pohl T.M."/>
            <person name="Eger P."/>
            <person name="Zimmermann W."/>
            <person name="Wedler H."/>
            <person name="Wambutt R."/>
            <person name="Purnelle B."/>
            <person name="Goffeau A."/>
            <person name="Cadieu E."/>
            <person name="Dreano S."/>
            <person name="Gloux S."/>
            <person name="Lelaure V."/>
            <person name="Mottier S."/>
            <person name="Galibert F."/>
            <person name="Aves S.J."/>
            <person name="Xiang Z."/>
            <person name="Hunt C."/>
            <person name="Moore K."/>
            <person name="Hurst S.M."/>
            <person name="Lucas M."/>
            <person name="Rochet M."/>
            <person name="Gaillardin C."/>
            <person name="Tallada V.A."/>
            <person name="Garzon A."/>
            <person name="Thode G."/>
            <person name="Daga R.R."/>
            <person name="Cruzado L."/>
            <person name="Jimenez J."/>
            <person name="Sanchez M."/>
            <person name="del Rey F."/>
            <person name="Benito J."/>
            <person name="Dominguez A."/>
            <person name="Revuelta J.L."/>
            <person name="Moreno S."/>
            <person name="Armstrong J."/>
            <person name="Forsburg S.L."/>
            <person name="Cerutti L."/>
            <person name="Lowe T."/>
            <person name="McCombie W.R."/>
            <person name="Paulsen I."/>
            <person name="Potashkin J."/>
            <person name="Shpakovski G.V."/>
            <person name="Ussery D."/>
            <person name="Barrell B.G."/>
            <person name="Nurse P."/>
        </authorList>
    </citation>
    <scope>NUCLEOTIDE SEQUENCE [LARGE SCALE GENOMIC DNA]</scope>
    <source>
        <strain>972 / ATCC 24843</strain>
    </source>
</reference>
<reference key="2">
    <citation type="journal article" date="2006" name="Nat. Biotechnol.">
        <title>ORFeome cloning and global analysis of protein localization in the fission yeast Schizosaccharomyces pombe.</title>
        <authorList>
            <person name="Matsuyama A."/>
            <person name="Arai R."/>
            <person name="Yashiroda Y."/>
            <person name="Shirai A."/>
            <person name="Kamata A."/>
            <person name="Sekido S."/>
            <person name="Kobayashi Y."/>
            <person name="Hashimoto A."/>
            <person name="Hamamoto M."/>
            <person name="Hiraoka Y."/>
            <person name="Horinouchi S."/>
            <person name="Yoshida M."/>
        </authorList>
    </citation>
    <scope>SUBCELLULAR LOCATION [LARGE SCALE ANALYSIS]</scope>
</reference>
<reference key="3">
    <citation type="journal article" date="2009" name="Eukaryot. Cell">
        <title>Phosphatidylethanolamine is required for normal cell morphology and cytokinesis in the fission yeast Schizosaccharomyces pombe.</title>
        <authorList>
            <person name="Luo J."/>
            <person name="Matsuo Y."/>
            <person name="Gulis G."/>
            <person name="Hinz H."/>
            <person name="Patton-Vogt J."/>
            <person name="Marcus S."/>
        </authorList>
    </citation>
    <scope>FUNCTION</scope>
</reference>
<reference key="4">
    <citation type="journal article" date="2022" name="Mol. Biol. Cell">
        <title>ER-localized phosphatidylethanolamine synthase plays a conserved role in lipid droplet formation.</title>
        <authorList>
            <person name="Gok M.O."/>
            <person name="Speer N.O."/>
            <person name="Henne W.M."/>
            <person name="Friedman J.R."/>
        </authorList>
    </citation>
    <scope>SUBCELLULAR LOCATION</scope>
    <scope>DISRUPTION PHENOTYPE</scope>
</reference>
<feature type="transit peptide" description="Mitochondrion" evidence="1">
    <location>
        <begin position="1"/>
        <end position="18"/>
    </location>
</feature>
<feature type="chain" id="PRO_0000353844" description="Phosphatidylserine decarboxylase proenzyme 1, mitochondrial">
    <location>
        <begin position="19"/>
        <end position="437"/>
    </location>
</feature>
<feature type="chain" id="PRO_0000353845" description="Phosphatidylserine decarboxylase 1 beta chain" evidence="1">
    <location>
        <begin position="19"/>
        <end position="400"/>
    </location>
</feature>
<feature type="chain" id="PRO_0000353846" description="Phosphatidylserine decarboxylase 1 alpha chain" evidence="1">
    <location>
        <begin position="401"/>
        <end position="437"/>
    </location>
</feature>
<feature type="topological domain" description="Mitochondrial matrix" evidence="1">
    <location>
        <begin position="19"/>
        <end position="38"/>
    </location>
</feature>
<feature type="transmembrane region" description="Helical" evidence="1">
    <location>
        <begin position="39"/>
        <end position="57"/>
    </location>
</feature>
<feature type="topological domain" description="Mitochondrial intermembrane" evidence="1">
    <location>
        <begin position="58"/>
        <end position="437"/>
    </location>
</feature>
<feature type="active site" description="Charge relay system; for autoendoproteolytic cleavage activity" evidence="1">
    <location>
        <position position="157"/>
    </location>
</feature>
<feature type="active site" description="Charge relay system; for autoendoproteolytic cleavage activity" evidence="1">
    <location>
        <position position="287"/>
    </location>
</feature>
<feature type="active site" description="Charge relay system; for autoendoproteolytic cleavage activity" evidence="1">
    <location>
        <position position="401"/>
    </location>
</feature>
<feature type="active site" description="Schiff-base intermediate with substrate; via pyruvic acid; for decarboxylase activity" evidence="1">
    <location>
        <position position="401"/>
    </location>
</feature>
<feature type="site" description="Cleavage (non-hydrolytic); by autocatalysis" evidence="1">
    <location>
        <begin position="400"/>
        <end position="401"/>
    </location>
</feature>
<feature type="modified residue" description="Pyruvic acid (Ser); by autocatalysis" evidence="1">
    <location>
        <position position="401"/>
    </location>
</feature>
<organism>
    <name type="scientific">Schizosaccharomyces pombe (strain 972 / ATCC 24843)</name>
    <name type="common">Fission yeast</name>
    <dbReference type="NCBI Taxonomy" id="284812"/>
    <lineage>
        <taxon>Eukaryota</taxon>
        <taxon>Fungi</taxon>
        <taxon>Dikarya</taxon>
        <taxon>Ascomycota</taxon>
        <taxon>Taphrinomycotina</taxon>
        <taxon>Schizosaccharomycetes</taxon>
        <taxon>Schizosaccharomycetales</taxon>
        <taxon>Schizosaccharomycetaceae</taxon>
        <taxon>Schizosaccharomyces</taxon>
    </lineage>
</organism>
<accession>O14333</accession>
<accession>O42966</accession>
<evidence type="ECO:0000255" key="1">
    <source>
        <dbReference type="HAMAP-Rule" id="MF_03208"/>
    </source>
</evidence>
<evidence type="ECO:0000269" key="2">
    <source>
    </source>
</evidence>
<evidence type="ECO:0000269" key="3">
    <source>
    </source>
</evidence>
<evidence type="ECO:0000303" key="4">
    <source>
    </source>
</evidence>
<evidence type="ECO:0000305" key="5">
    <source>
    </source>
</evidence>
<evidence type="ECO:0000305" key="6">
    <source>
    </source>
</evidence>
<evidence type="ECO:0000312" key="7">
    <source>
        <dbReference type="PomBase" id="SPBC16E9.18"/>
    </source>
</evidence>
<gene>
    <name evidence="1 4" type="primary">psd1</name>
    <name evidence="7" type="ORF">SPBC16E9.18</name>
    <name type="ORF">SPBC1E8.01</name>
</gene>
<sequence length="437" mass="49129">MLKFHRNVKPQFGAFARYSSLGKHNSRKRVGIIRLAYGLTGIGLVGLAGFAWAQDRHEKTYQKKGVQVEGPWQFYVLTTLPLRTLSRWWGYVNRIEIPLWMRVPAFGLYSKIFGCNLTEADPDDVRQYKNLAEFFTRKLKPGARVIDPDAPIVIPADGKILNYGVIEGGQLEQVKGITYSLDALLGDEKLARLKRSHAIPSPDHIPHIRQEEFAKLNGIHYSLQDLMGHDHGERPSHVKDASAQHIDLLSSTKVAAKSQFTLFGSRETNCLYYAVIYLAPGDYHRFHSPTDWVVERRRHFSGELFSVSPFMARRLGNLFILNERVALMGRYKYGFMSMIPVGATNVGSIRIKFDKDLCTNQFGKLGPVGTFDEAVYTSSSSILHGHPLLRGDEVGNFELGSTVVLVFEAPADFEFLVKQGQKVRVGLPLGRVVPSSH</sequence>
<proteinExistence type="inferred from homology"/>
<keyword id="KW-0210">Decarboxylase</keyword>
<keyword id="KW-0444">Lipid biosynthesis</keyword>
<keyword id="KW-0443">Lipid metabolism</keyword>
<keyword id="KW-0456">Lyase</keyword>
<keyword id="KW-0472">Membrane</keyword>
<keyword id="KW-0496">Mitochondrion</keyword>
<keyword id="KW-0999">Mitochondrion inner membrane</keyword>
<keyword id="KW-0594">Phospholipid biosynthesis</keyword>
<keyword id="KW-1208">Phospholipid metabolism</keyword>
<keyword id="KW-0670">Pyruvate</keyword>
<keyword id="KW-1185">Reference proteome</keyword>
<keyword id="KW-0809">Transit peptide</keyword>
<keyword id="KW-0812">Transmembrane</keyword>
<keyword id="KW-1133">Transmembrane helix</keyword>
<keyword id="KW-0865">Zymogen</keyword>
<dbReference type="EC" id="4.1.1.65" evidence="1"/>
<dbReference type="EMBL" id="CU329671">
    <property type="protein sequence ID" value="CAB16910.2"/>
    <property type="molecule type" value="Genomic_DNA"/>
</dbReference>
<dbReference type="RefSeq" id="NP_595799.2">
    <property type="nucleotide sequence ID" value="NM_001021700.3"/>
</dbReference>
<dbReference type="SMR" id="O14333"/>
<dbReference type="BioGRID" id="276308">
    <property type="interactions" value="1"/>
</dbReference>
<dbReference type="FunCoup" id="O14333">
    <property type="interactions" value="350"/>
</dbReference>
<dbReference type="STRING" id="284812.O14333"/>
<dbReference type="PaxDb" id="4896-SPBC16E9.18.1"/>
<dbReference type="EnsemblFungi" id="SPBC16E9.18.1">
    <property type="protein sequence ID" value="SPBC16E9.18.1:pep"/>
    <property type="gene ID" value="SPBC16E9.18"/>
</dbReference>
<dbReference type="GeneID" id="2539756"/>
<dbReference type="KEGG" id="spo:2539756"/>
<dbReference type="PomBase" id="SPBC16E9.18">
    <property type="gene designation" value="psd1"/>
</dbReference>
<dbReference type="VEuPathDB" id="FungiDB:SPBC16E9.18"/>
<dbReference type="eggNOG" id="KOG2420">
    <property type="taxonomic scope" value="Eukaryota"/>
</dbReference>
<dbReference type="HOGENOM" id="CLU_029061_1_1_1"/>
<dbReference type="InParanoid" id="O14333"/>
<dbReference type="OMA" id="KDYHHYH"/>
<dbReference type="PhylomeDB" id="O14333"/>
<dbReference type="UniPathway" id="UPA00558">
    <property type="reaction ID" value="UER00616"/>
</dbReference>
<dbReference type="PRO" id="PR:O14333"/>
<dbReference type="Proteomes" id="UP000002485">
    <property type="component" value="Chromosome II"/>
</dbReference>
<dbReference type="GO" id="GO:0005743">
    <property type="term" value="C:mitochondrial inner membrane"/>
    <property type="evidence" value="ECO:0000250"/>
    <property type="project" value="PomBase"/>
</dbReference>
<dbReference type="GO" id="GO:0005739">
    <property type="term" value="C:mitochondrion"/>
    <property type="evidence" value="ECO:0000314"/>
    <property type="project" value="UniProtKB"/>
</dbReference>
<dbReference type="GO" id="GO:0004609">
    <property type="term" value="F:phosphatidylserine decarboxylase activity"/>
    <property type="evidence" value="ECO:0000315"/>
    <property type="project" value="PomBase"/>
</dbReference>
<dbReference type="GO" id="GO:0006656">
    <property type="term" value="P:phosphatidylcholine biosynthetic process"/>
    <property type="evidence" value="ECO:0000250"/>
    <property type="project" value="PomBase"/>
</dbReference>
<dbReference type="GO" id="GO:0006646">
    <property type="term" value="P:phosphatidylethanolamine biosynthetic process"/>
    <property type="evidence" value="ECO:0000315"/>
    <property type="project" value="PomBase"/>
</dbReference>
<dbReference type="GO" id="GO:0016540">
    <property type="term" value="P:protein autoprocessing"/>
    <property type="evidence" value="ECO:0007669"/>
    <property type="project" value="UniProtKB-UniRule"/>
</dbReference>
<dbReference type="HAMAP" id="MF_03208">
    <property type="entry name" value="PS_decarb_PSD_B_type1_euk"/>
    <property type="match status" value="1"/>
</dbReference>
<dbReference type="InterPro" id="IPR003817">
    <property type="entry name" value="PS_Dcarbxylase"/>
</dbReference>
<dbReference type="InterPro" id="IPR033177">
    <property type="entry name" value="PSD-B"/>
</dbReference>
<dbReference type="InterPro" id="IPR033661">
    <property type="entry name" value="PSD_type1_euk"/>
</dbReference>
<dbReference type="NCBIfam" id="TIGR00163">
    <property type="entry name" value="PS_decarb"/>
    <property type="match status" value="1"/>
</dbReference>
<dbReference type="PANTHER" id="PTHR10067">
    <property type="entry name" value="PHOSPHATIDYLSERINE DECARBOXYLASE"/>
    <property type="match status" value="1"/>
</dbReference>
<dbReference type="PANTHER" id="PTHR10067:SF6">
    <property type="entry name" value="PHOSPHATIDYLSERINE DECARBOXYLASE PROENZYME, MITOCHONDRIAL"/>
    <property type="match status" value="1"/>
</dbReference>
<dbReference type="Pfam" id="PF02666">
    <property type="entry name" value="PS_Dcarbxylase"/>
    <property type="match status" value="2"/>
</dbReference>
<name>PSD1_SCHPO</name>
<comment type="function">
    <text evidence="1 2">Catalyzes the formation of phosphatidylethanolamine (PtdEtn) from phosphatidylserine (PtdSer). Plays a central role in phospholipid metabolism and in the interorganelle trafficking of phosphatidylserine (By similarity). Together with psd2 and psd3, responsible for the majority of phosphatidylethanolamine synthesis (PubMed:19286980).</text>
</comment>
<comment type="catalytic activity">
    <reaction evidence="1">
        <text>a 1,2-diacyl-sn-glycero-3-phospho-L-serine + H(+) = a 1,2-diacyl-sn-glycero-3-phosphoethanolamine + CO2</text>
        <dbReference type="Rhea" id="RHEA:20828"/>
        <dbReference type="ChEBI" id="CHEBI:15378"/>
        <dbReference type="ChEBI" id="CHEBI:16526"/>
        <dbReference type="ChEBI" id="CHEBI:57262"/>
        <dbReference type="ChEBI" id="CHEBI:64612"/>
        <dbReference type="EC" id="4.1.1.65"/>
    </reaction>
</comment>
<comment type="cofactor">
    <cofactor evidence="1">
        <name>pyruvate</name>
        <dbReference type="ChEBI" id="CHEBI:15361"/>
    </cofactor>
    <text evidence="1">Binds 1 pyruvoyl group covalently per subunit.</text>
</comment>
<comment type="pathway">
    <text evidence="1">Phospholipid metabolism; phosphatidylethanolamine biosynthesis; phosphatidylethanolamine from CDP-diacylglycerol: step 2/2.</text>
</comment>
<comment type="subunit">
    <text evidence="1">Heterodimer of a large membrane-associated beta subunit and a small pyruvoyl-containing alpha subunit.</text>
</comment>
<comment type="subcellular location">
    <molecule>Phosphatidylserine decarboxylase 1 beta chain</molecule>
    <subcellularLocation>
        <location evidence="5 6">Mitochondrion</location>
    </subcellularLocation>
    <subcellularLocation>
        <location evidence="1">Mitochondrion inner membrane</location>
        <topology evidence="1">Single-pass membrane protein</topology>
        <orientation evidence="1">Intermembrane side</orientation>
    </subcellularLocation>
</comment>
<comment type="subcellular location">
    <molecule>Phosphatidylserine decarboxylase 1 alpha chain</molecule>
    <subcellularLocation>
        <location evidence="5 6">Mitochondrion</location>
    </subcellularLocation>
    <subcellularLocation>
        <location evidence="1">Mitochondrion inner membrane</location>
        <topology evidence="1">Peripheral membrane protein</topology>
        <orientation evidence="1">Intermembrane side</orientation>
    </subcellularLocation>
    <text evidence="1">Anchored to the mitochondrial inner membrane through its interaction with the integral membrane beta chain.</text>
</comment>
<comment type="PTM">
    <text evidence="1">Is synthesized initially as an inactive proenzyme. Formation of the active enzyme involves a self-maturation process in which the active site pyruvoyl group is generated from an internal serine residue via an autocatalytic post-translational modification. Two non-identical subunits are generated from the proenzyme in this reaction, and the pyruvate is formed at the N-terminus of the alpha chain, which is derived from the carboxyl end of the proenzyme. The autoendoproteolytic cleavage occurs by a canonical serine protease mechanism, in which the side chain hydroxyl group of the serine supplies its oxygen atom to form the C-terminus of the beta chain, while the remainder of the serine residue undergoes an oxidative deamination to produce ammonia and the pyruvoyl prosthetic group on the alpha chain. During this reaction, the Ser that is part of the protease active site of the proenzyme becomes the pyruvoyl prosthetic group, which constitutes an essential element of the active site of the mature decarboxylase.</text>
</comment>
<comment type="disruption phenotype">
    <text evidence="3">Impairs growth on non-fermentable carbon sources (ethanol and glycerol).</text>
</comment>
<comment type="similarity">
    <text evidence="1">Belongs to the phosphatidylserine decarboxylase family. PSD-B subfamily. Eukaryotic type I sub-subfamily.</text>
</comment>
<protein>
    <recommendedName>
        <fullName evidence="1 4">Phosphatidylserine decarboxylase proenzyme 1, mitochondrial</fullName>
        <ecNumber evidence="1">4.1.1.65</ecNumber>
    </recommendedName>
    <component>
        <recommendedName>
            <fullName evidence="1">Phosphatidylserine decarboxylase 1 beta chain</fullName>
        </recommendedName>
    </component>
    <component>
        <recommendedName>
            <fullName evidence="1">Phosphatidylserine decarboxylase 1 alpha chain</fullName>
        </recommendedName>
    </component>
</protein>